<evidence type="ECO:0000255" key="1"/>
<evidence type="ECO:0000256" key="2">
    <source>
        <dbReference type="SAM" id="MobiDB-lite"/>
    </source>
</evidence>
<evidence type="ECO:0000303" key="3">
    <source>
    </source>
</evidence>
<evidence type="ECO:0000305" key="4"/>
<dbReference type="EMBL" id="AB070070">
    <property type="protein sequence ID" value="BAB63015.1"/>
    <property type="molecule type" value="mRNA"/>
</dbReference>
<dbReference type="EMBL" id="AB071089">
    <property type="protein sequence ID" value="BAB64483.1"/>
    <property type="molecule type" value="mRNA"/>
</dbReference>
<dbReference type="EMBL" id="AB074444">
    <property type="protein sequence ID" value="BAB72075.1"/>
    <property type="molecule type" value="mRNA"/>
</dbReference>
<dbReference type="SMR" id="Q8WP33"/>
<dbReference type="STRING" id="9541.ENSMFAP00000037847"/>
<dbReference type="eggNOG" id="ENOG502SNA5">
    <property type="taxonomic scope" value="Eukaryota"/>
</dbReference>
<dbReference type="Proteomes" id="UP000233100">
    <property type="component" value="Unplaced"/>
</dbReference>
<dbReference type="InterPro" id="IPR052825">
    <property type="entry name" value="CCD-Prefoldin_beta-like"/>
</dbReference>
<dbReference type="InterPro" id="IPR031476">
    <property type="entry name" value="DUF4686"/>
</dbReference>
<dbReference type="PANTHER" id="PTHR34479">
    <property type="entry name" value="COILED-COIL DOMAIN-CONTAINING PROTEIN 30"/>
    <property type="match status" value="1"/>
</dbReference>
<dbReference type="PANTHER" id="PTHR34479:SF1">
    <property type="entry name" value="COILED-COIL DOMAIN-CONTAINING PROTEIN 30"/>
    <property type="match status" value="1"/>
</dbReference>
<dbReference type="Pfam" id="PF15742">
    <property type="entry name" value="DUF4686"/>
    <property type="match status" value="1"/>
</dbReference>
<gene>
    <name type="primary">CCDC30</name>
    <name type="synonym">PFDN6L</name>
    <name type="ORF">QtsA-10590</name>
    <name type="ORF">QtsA-16296</name>
    <name type="ORF">QtsA-17713</name>
</gene>
<feature type="chain" id="PRO_0000336045" description="Coiled-coil domain-containing protein 30">
    <location>
        <begin position="1"/>
        <end position="743"/>
    </location>
</feature>
<feature type="region of interest" description="Disordered" evidence="2">
    <location>
        <begin position="1"/>
        <end position="25"/>
    </location>
</feature>
<feature type="region of interest" description="Disordered" evidence="2">
    <location>
        <begin position="114"/>
        <end position="193"/>
    </location>
</feature>
<feature type="region of interest" description="Disordered" evidence="2">
    <location>
        <begin position="208"/>
        <end position="233"/>
    </location>
</feature>
<feature type="region of interest" description="Disordered" evidence="2">
    <location>
        <begin position="695"/>
        <end position="715"/>
    </location>
</feature>
<feature type="coiled-coil region" evidence="1">
    <location>
        <begin position="21"/>
        <end position="98"/>
    </location>
</feature>
<feature type="coiled-coil region" evidence="1">
    <location>
        <begin position="165"/>
        <end position="580"/>
    </location>
</feature>
<feature type="compositionally biased region" description="Basic and acidic residues" evidence="2">
    <location>
        <begin position="1"/>
        <end position="22"/>
    </location>
</feature>
<feature type="compositionally biased region" description="Basic and acidic residues" evidence="2">
    <location>
        <begin position="133"/>
        <end position="193"/>
    </location>
</feature>
<feature type="compositionally biased region" description="Low complexity" evidence="2">
    <location>
        <begin position="208"/>
        <end position="223"/>
    </location>
</feature>
<feature type="splice variant" id="VSP_033793" description="In isoform 3." evidence="3">
    <original>S</original>
    <variation>SESHGLISRFNPLSCHLGKIYQEIQSAYILKRDL</variation>
    <location>
        <position position="38"/>
    </location>
</feature>
<feature type="splice variant" id="VSP_033794" description="In isoform 3." evidence="3">
    <original>SKVA</original>
    <variation>MKLK</variation>
    <location>
        <begin position="347"/>
        <end position="350"/>
    </location>
</feature>
<feature type="splice variant" id="VSP_033795" description="In isoform 3." evidence="3">
    <location>
        <begin position="351"/>
        <end position="743"/>
    </location>
</feature>
<feature type="splice variant" id="VSP_033796" description="In isoform 2." evidence="3">
    <original>KAIQDQITAQNDTLLLEKRKLQEQVIEQEQLI</original>
    <variation>EEGKTHRQTQTGEECLMMMKSETGMIQLQAKK</variation>
    <location>
        <begin position="547"/>
        <end position="578"/>
    </location>
</feature>
<feature type="splice variant" id="VSP_033797" description="In isoform 2." evidence="3">
    <location>
        <begin position="579"/>
        <end position="743"/>
    </location>
</feature>
<feature type="sequence conflict" description="In Ref. 1; BAB63015." evidence="4" ref="1">
    <original>E</original>
    <variation>G</variation>
    <location>
        <position position="156"/>
    </location>
</feature>
<organism>
    <name type="scientific">Macaca fascicularis</name>
    <name type="common">Crab-eating macaque</name>
    <name type="synonym">Cynomolgus monkey</name>
    <dbReference type="NCBI Taxonomy" id="9541"/>
    <lineage>
        <taxon>Eukaryota</taxon>
        <taxon>Metazoa</taxon>
        <taxon>Chordata</taxon>
        <taxon>Craniata</taxon>
        <taxon>Vertebrata</taxon>
        <taxon>Euteleostomi</taxon>
        <taxon>Mammalia</taxon>
        <taxon>Eutheria</taxon>
        <taxon>Euarchontoglires</taxon>
        <taxon>Primates</taxon>
        <taxon>Haplorrhini</taxon>
        <taxon>Catarrhini</taxon>
        <taxon>Cercopithecidae</taxon>
        <taxon>Cercopithecinae</taxon>
        <taxon>Macaca</taxon>
    </lineage>
</organism>
<proteinExistence type="evidence at transcript level"/>
<name>CCD30_MACFA</name>
<reference key="1">
    <citation type="journal article" date="2002" name="BMC Genomics">
        <title>Cynomolgus monkey testicular cDNAs for discovery of novel human genes in the human genome sequence.</title>
        <authorList>
            <person name="Osada N."/>
            <person name="Hida M."/>
            <person name="Kusuda J."/>
            <person name="Tanuma R."/>
            <person name="Hirata M."/>
            <person name="Suto Y."/>
            <person name="Hirai M."/>
            <person name="Terao K."/>
            <person name="Sugano S."/>
            <person name="Hashimoto K."/>
        </authorList>
    </citation>
    <scope>NUCLEOTIDE SEQUENCE [LARGE SCALE MRNA] (ISOFORMS 1; 2 AND 3)</scope>
    <source>
        <tissue>Testis</tissue>
    </source>
</reference>
<accession>Q8WP33</accession>
<accession>Q95JV8</accession>
<accession>Q95LV2</accession>
<protein>
    <recommendedName>
        <fullName>Coiled-coil domain-containing protein 30</fullName>
    </recommendedName>
    <alternativeName>
        <fullName>Prefoldin subunit 6-like protein</fullName>
    </alternativeName>
</protein>
<keyword id="KW-0025">Alternative splicing</keyword>
<keyword id="KW-0175">Coiled coil</keyword>
<keyword id="KW-1185">Reference proteome</keyword>
<comment type="alternative products">
    <event type="alternative splicing"/>
    <isoform>
        <id>Q8WP33-1</id>
        <name>1</name>
        <sequence type="displayed"/>
    </isoform>
    <isoform>
        <id>Q8WP33-2</id>
        <name>2</name>
        <sequence type="described" ref="VSP_033796 VSP_033797"/>
    </isoform>
    <isoform>
        <id>Q8WP33-3</id>
        <name>3</name>
        <sequence type="described" ref="VSP_033793 VSP_033794 VSP_033795"/>
    </isoform>
</comment>
<comment type="similarity">
    <text evidence="4">Belongs to the prefoldin subunit beta family.</text>
</comment>
<sequence length="743" mass="86465">MSQEKNEMFESEWSKEREREKQLASGLDTAEKALKAESEELQKSKSELICLYNEVHNLPGASESRDHFLIACDLLRRENSELETKVLKLSQEFAQLNHFTLRGKTAPSNLITSENICKDPESNEPVLEIEIQSPKEEREELCPKLGERKQKEIPEESVKEGSFPREGQKEEGSQQNQDMKDEEKEQRLTMKPEEVVRLREELSRINQSLLQSQSSGDSSDDSGAQYPSSGDKLKYNQQGEVQQLHQNLHRLQILCNSAENELRYERGKNLDLKQHNSLLQEENIKIKIELKHAQQKLLESTKMCSSLTAECKQSQQKIKELELEVLKQTQSIKSQNNLQEKLAQEKSKVADAEEKILDLQRKLEHAHKVCLTDTCISEKQQLEEKIKEATENEAKVKQQYQEEQQKRKLLYQNTDELHRQVRTLQDKENLLEMTCSQQQSRIQQQEALLKQLENEKRKYDEDVKSNQELSEKLSKLQQEKEALREEYLRLLKLLNVHVRNYNEKHQQHKIKLQKVKYRLTNEVELRDKRINEFEDEIGILQHKIEKKAIQDQITAQNDTLLLEKRKLQEQVIEQEQLIHSNKWTISSIQSRVLYMDKENKQLQEISLRLPATKKQKEIYSTEVCTCNNAELQHEDESVPKATEKWKHSEQMETTISDILESEVVNEILPLSNSSFSGKGLVESFVSLQETDDIKSKEAMASSKSPEKSPENLVCSQNSEAGYINVTSLKETHGIQEQDQKSEL</sequence>